<protein>
    <recommendedName>
        <fullName evidence="1">Nucleoside diphosphate kinase</fullName>
        <shortName evidence="1">NDK</shortName>
        <shortName evidence="1">NDP kinase</shortName>
        <ecNumber evidence="1">2.7.4.6</ecNumber>
    </recommendedName>
    <alternativeName>
        <fullName evidence="1">Nucleoside-2-P kinase</fullName>
    </alternativeName>
</protein>
<dbReference type="EC" id="2.7.4.6" evidence="1"/>
<dbReference type="EMBL" id="AP009044">
    <property type="protein sequence ID" value="BAF55256.1"/>
    <property type="molecule type" value="Genomic_DNA"/>
</dbReference>
<dbReference type="RefSeq" id="WP_003859294.1">
    <property type="nucleotide sequence ID" value="NC_009342.1"/>
</dbReference>
<dbReference type="SMR" id="A4QG90"/>
<dbReference type="GeneID" id="1020320"/>
<dbReference type="KEGG" id="cgt:cgR_2252"/>
<dbReference type="HOGENOM" id="CLU_060216_6_3_11"/>
<dbReference type="PhylomeDB" id="A4QG90"/>
<dbReference type="Proteomes" id="UP000006698">
    <property type="component" value="Chromosome"/>
</dbReference>
<dbReference type="GO" id="GO:0005737">
    <property type="term" value="C:cytoplasm"/>
    <property type="evidence" value="ECO:0007669"/>
    <property type="project" value="UniProtKB-SubCell"/>
</dbReference>
<dbReference type="GO" id="GO:0005524">
    <property type="term" value="F:ATP binding"/>
    <property type="evidence" value="ECO:0007669"/>
    <property type="project" value="UniProtKB-UniRule"/>
</dbReference>
<dbReference type="GO" id="GO:0046872">
    <property type="term" value="F:metal ion binding"/>
    <property type="evidence" value="ECO:0007669"/>
    <property type="project" value="UniProtKB-KW"/>
</dbReference>
<dbReference type="GO" id="GO:0004550">
    <property type="term" value="F:nucleoside diphosphate kinase activity"/>
    <property type="evidence" value="ECO:0007669"/>
    <property type="project" value="UniProtKB-UniRule"/>
</dbReference>
<dbReference type="GO" id="GO:0006241">
    <property type="term" value="P:CTP biosynthetic process"/>
    <property type="evidence" value="ECO:0007669"/>
    <property type="project" value="UniProtKB-UniRule"/>
</dbReference>
<dbReference type="GO" id="GO:0006183">
    <property type="term" value="P:GTP biosynthetic process"/>
    <property type="evidence" value="ECO:0007669"/>
    <property type="project" value="UniProtKB-UniRule"/>
</dbReference>
<dbReference type="GO" id="GO:0006228">
    <property type="term" value="P:UTP biosynthetic process"/>
    <property type="evidence" value="ECO:0007669"/>
    <property type="project" value="UniProtKB-UniRule"/>
</dbReference>
<dbReference type="CDD" id="cd04413">
    <property type="entry name" value="NDPk_I"/>
    <property type="match status" value="1"/>
</dbReference>
<dbReference type="FunFam" id="3.30.70.141:FF:000003">
    <property type="entry name" value="Nucleoside diphosphate kinase"/>
    <property type="match status" value="1"/>
</dbReference>
<dbReference type="Gene3D" id="3.30.70.141">
    <property type="entry name" value="Nucleoside diphosphate kinase-like domain"/>
    <property type="match status" value="1"/>
</dbReference>
<dbReference type="HAMAP" id="MF_00451">
    <property type="entry name" value="NDP_kinase"/>
    <property type="match status" value="1"/>
</dbReference>
<dbReference type="InterPro" id="IPR034907">
    <property type="entry name" value="NDK-like_dom"/>
</dbReference>
<dbReference type="InterPro" id="IPR036850">
    <property type="entry name" value="NDK-like_dom_sf"/>
</dbReference>
<dbReference type="InterPro" id="IPR001564">
    <property type="entry name" value="Nucleoside_diP_kinase"/>
</dbReference>
<dbReference type="InterPro" id="IPR023005">
    <property type="entry name" value="Nucleoside_diP_kinase_AS"/>
</dbReference>
<dbReference type="NCBIfam" id="NF001908">
    <property type="entry name" value="PRK00668.1"/>
    <property type="match status" value="1"/>
</dbReference>
<dbReference type="PANTHER" id="PTHR11349">
    <property type="entry name" value="NUCLEOSIDE DIPHOSPHATE KINASE"/>
    <property type="match status" value="1"/>
</dbReference>
<dbReference type="Pfam" id="PF00334">
    <property type="entry name" value="NDK"/>
    <property type="match status" value="1"/>
</dbReference>
<dbReference type="PRINTS" id="PR01243">
    <property type="entry name" value="NUCDPKINASE"/>
</dbReference>
<dbReference type="SMART" id="SM00562">
    <property type="entry name" value="NDK"/>
    <property type="match status" value="1"/>
</dbReference>
<dbReference type="SUPFAM" id="SSF54919">
    <property type="entry name" value="Nucleoside diphosphate kinase, NDK"/>
    <property type="match status" value="1"/>
</dbReference>
<dbReference type="PROSITE" id="PS00469">
    <property type="entry name" value="NDPK"/>
    <property type="match status" value="1"/>
</dbReference>
<dbReference type="PROSITE" id="PS51374">
    <property type="entry name" value="NDPK_LIKE"/>
    <property type="match status" value="1"/>
</dbReference>
<comment type="function">
    <text evidence="1">Major role in the synthesis of nucleoside triphosphates other than ATP. The ATP gamma phosphate is transferred to the NDP beta phosphate via a ping-pong mechanism, using a phosphorylated active-site intermediate.</text>
</comment>
<comment type="catalytic activity">
    <reaction evidence="1">
        <text>a 2'-deoxyribonucleoside 5'-diphosphate + ATP = a 2'-deoxyribonucleoside 5'-triphosphate + ADP</text>
        <dbReference type="Rhea" id="RHEA:44640"/>
        <dbReference type="ChEBI" id="CHEBI:30616"/>
        <dbReference type="ChEBI" id="CHEBI:61560"/>
        <dbReference type="ChEBI" id="CHEBI:73316"/>
        <dbReference type="ChEBI" id="CHEBI:456216"/>
        <dbReference type="EC" id="2.7.4.6"/>
    </reaction>
</comment>
<comment type="catalytic activity">
    <reaction evidence="1">
        <text>a ribonucleoside 5'-diphosphate + ATP = a ribonucleoside 5'-triphosphate + ADP</text>
        <dbReference type="Rhea" id="RHEA:18113"/>
        <dbReference type="ChEBI" id="CHEBI:30616"/>
        <dbReference type="ChEBI" id="CHEBI:57930"/>
        <dbReference type="ChEBI" id="CHEBI:61557"/>
        <dbReference type="ChEBI" id="CHEBI:456216"/>
        <dbReference type="EC" id="2.7.4.6"/>
    </reaction>
</comment>
<comment type="cofactor">
    <cofactor evidence="1">
        <name>Mg(2+)</name>
        <dbReference type="ChEBI" id="CHEBI:18420"/>
    </cofactor>
</comment>
<comment type="subunit">
    <text evidence="1">Homotetramer.</text>
</comment>
<comment type="subcellular location">
    <subcellularLocation>
        <location evidence="1">Cytoplasm</location>
    </subcellularLocation>
</comment>
<comment type="similarity">
    <text evidence="1">Belongs to the NDK family.</text>
</comment>
<name>NDK_CORGB</name>
<reference key="1">
    <citation type="journal article" date="2007" name="Microbiology">
        <title>Comparative analysis of the Corynebacterium glutamicum group and complete genome sequence of strain R.</title>
        <authorList>
            <person name="Yukawa H."/>
            <person name="Omumasaba C.A."/>
            <person name="Nonaka H."/>
            <person name="Kos P."/>
            <person name="Okai N."/>
            <person name="Suzuki N."/>
            <person name="Suda M."/>
            <person name="Tsuge Y."/>
            <person name="Watanabe J."/>
            <person name="Ikeda Y."/>
            <person name="Vertes A.A."/>
            <person name="Inui M."/>
        </authorList>
    </citation>
    <scope>NUCLEOTIDE SEQUENCE [LARGE SCALE GENOMIC DNA]</scope>
    <source>
        <strain>R</strain>
    </source>
</reference>
<organism>
    <name type="scientific">Corynebacterium glutamicum (strain R)</name>
    <dbReference type="NCBI Taxonomy" id="340322"/>
    <lineage>
        <taxon>Bacteria</taxon>
        <taxon>Bacillati</taxon>
        <taxon>Actinomycetota</taxon>
        <taxon>Actinomycetes</taxon>
        <taxon>Mycobacteriales</taxon>
        <taxon>Corynebacteriaceae</taxon>
        <taxon>Corynebacterium</taxon>
    </lineage>
</organism>
<keyword id="KW-0067">ATP-binding</keyword>
<keyword id="KW-0963">Cytoplasm</keyword>
<keyword id="KW-0418">Kinase</keyword>
<keyword id="KW-0460">Magnesium</keyword>
<keyword id="KW-0479">Metal-binding</keyword>
<keyword id="KW-0546">Nucleotide metabolism</keyword>
<keyword id="KW-0547">Nucleotide-binding</keyword>
<keyword id="KW-0597">Phosphoprotein</keyword>
<keyword id="KW-0808">Transferase</keyword>
<proteinExistence type="inferred from homology"/>
<accession>A4QG90</accession>
<sequence>MTERTLILIKPDGVTNGHVGEIIARIERKGLKLAALDLRVADRETAEKHYEEHADKPFFGELVEFITSAPLIAGIVEGERAIDAWRQLAGGTDPVAKATPGTIRGDFALTVGENVVHGSDSPESAEREISIWFPNL</sequence>
<evidence type="ECO:0000255" key="1">
    <source>
        <dbReference type="HAMAP-Rule" id="MF_00451"/>
    </source>
</evidence>
<feature type="chain" id="PRO_1000026229" description="Nucleoside diphosphate kinase">
    <location>
        <begin position="1"/>
        <end position="136"/>
    </location>
</feature>
<feature type="active site" description="Pros-phosphohistidine intermediate" evidence="1">
    <location>
        <position position="117"/>
    </location>
</feature>
<feature type="binding site" evidence="1">
    <location>
        <position position="10"/>
    </location>
    <ligand>
        <name>ATP</name>
        <dbReference type="ChEBI" id="CHEBI:30616"/>
    </ligand>
</feature>
<feature type="binding site" evidence="1">
    <location>
        <position position="58"/>
    </location>
    <ligand>
        <name>ATP</name>
        <dbReference type="ChEBI" id="CHEBI:30616"/>
    </ligand>
</feature>
<feature type="binding site" evidence="1">
    <location>
        <position position="86"/>
    </location>
    <ligand>
        <name>ATP</name>
        <dbReference type="ChEBI" id="CHEBI:30616"/>
    </ligand>
</feature>
<feature type="binding site" evidence="1">
    <location>
        <position position="92"/>
    </location>
    <ligand>
        <name>ATP</name>
        <dbReference type="ChEBI" id="CHEBI:30616"/>
    </ligand>
</feature>
<feature type="binding site" evidence="1">
    <location>
        <position position="104"/>
    </location>
    <ligand>
        <name>ATP</name>
        <dbReference type="ChEBI" id="CHEBI:30616"/>
    </ligand>
</feature>
<feature type="binding site" evidence="1">
    <location>
        <position position="114"/>
    </location>
    <ligand>
        <name>ATP</name>
        <dbReference type="ChEBI" id="CHEBI:30616"/>
    </ligand>
</feature>
<gene>
    <name evidence="1" type="primary">ndk</name>
    <name type="ordered locus">cgR_2252</name>
</gene>